<organism>
    <name type="scientific">Schizosaccharomyces pombe (strain 972 / ATCC 24843)</name>
    <name type="common">Fission yeast</name>
    <dbReference type="NCBI Taxonomy" id="284812"/>
    <lineage>
        <taxon>Eukaryota</taxon>
        <taxon>Fungi</taxon>
        <taxon>Dikarya</taxon>
        <taxon>Ascomycota</taxon>
        <taxon>Taphrinomycotina</taxon>
        <taxon>Schizosaccharomycetes</taxon>
        <taxon>Schizosaccharomycetales</taxon>
        <taxon>Schizosaccharomycetaceae</taxon>
        <taxon>Schizosaccharomyces</taxon>
    </lineage>
</organism>
<evidence type="ECO:0000250" key="1">
    <source>
        <dbReference type="UniProtKB" id="O74346"/>
    </source>
</evidence>
<evidence type="ECO:0000255" key="2"/>
<evidence type="ECO:0000255" key="3">
    <source>
        <dbReference type="PROSITE-ProRule" id="PRU00498"/>
    </source>
</evidence>
<evidence type="ECO:0000255" key="4">
    <source>
        <dbReference type="PROSITE-ProRule" id="PRU01169"/>
    </source>
</evidence>
<evidence type="ECO:0000269" key="5">
    <source>
    </source>
</evidence>
<evidence type="ECO:0000303" key="6">
    <source>
    </source>
</evidence>
<evidence type="ECO:0000303" key="7">
    <source>
    </source>
</evidence>
<evidence type="ECO:0000305" key="8"/>
<evidence type="ECO:0000305" key="9">
    <source>
    </source>
</evidence>
<evidence type="ECO:0000312" key="10">
    <source>
        <dbReference type="PomBase" id="SPBC947.04"/>
    </source>
</evidence>
<name>PFL3_SCHPO</name>
<sequence>MSLFPQILLRLLFLAFTLKSTSNAEKHDKVDYKDFVRRDDGDTCLRYTTIYSQGEYETTITIPPNSYSNGVSLSNGTLLSTSSPLISTSGQFTSNNVSTTSSQRHNTKTITFFSGTSDYTSVYYDTTGTDDVVYEYHPSSERHKSTNDTWSTNLPTNPTTTAIYSTSGSSNITTPYSNRITNSNTSVNDITSKYLSVGTITLTTISGSDLYTSTFPANGTTSGTVEVVIPTAGTVTETAVSGSELYTSTFPANGTTSGTVEVVIPTAGTRTVTKISGSKFFTTTTDASGTVSGTVEVVLPTAGTNTMTVVSGSRFFTSVVSASGTVSGEQVIVYPTAGMVTETIVSGSEIFNTTYPASGTRTGTVEVVIPTAGTVTETEISGSELYTSTFPANGTTSGTVEVVIPTAGTRTVTKISGSKFFTTTTDASGTVSGTVEVVLPTAGTNTMTVVSGSRFFTSVVSASGTVSGEHIIVEPTAGVVTETVVSGSVGYTTTYPAHDTVSGTVEVVEPTAGVVTETVVSGSVGYTTAYPAHDTVSGTVEVVEPTAGVVTETVVSGSVGYTTTYPAHDTVSGTVEVVEPTAGVVTETVVSGSVGYTTTYPAHDTVSGTVEVVEPTAGVVTETVVSGSVGYTTTYPAHDTVSGTVEVVEPTAGVVTETVVSGSVGYTTTYPAHDTVSGTVEVVEPTAGVVTETVVSGSVGYTTTYPAHDTVSGTVEVVEPTAGVVTETVVSGSVGYTTTYPAHDTVSGTVEVVEPTAGVVTETVVSGSVGYTTTYPVQGTVSGTVMIVEPTAGYVTVTTSLGSSSYATTVATASGTSTGTVLQVVPSLFPGCNSKCTSSNAFRILVENDSISPSYLTYRESDGFGIASSNPSPAGSEGIFYYDSTLKRVVTCCDERPYYRTMEGDLAKTYFFIEDEGDGTYKFKLTYGAFSEYLDVKILADSTFFFKAMDSSSSTILNQKVRASNVYFKAVPL</sequence>
<comment type="function">
    <text evidence="1 5">May be involved in agglutination during conjugation or other aspects of colony formation (By similarity). Induces flocculation when overexpressed (PubMed:23236291).</text>
</comment>
<comment type="subcellular location">
    <subcellularLocation>
        <location evidence="8">Cell surface</location>
    </subcellularLocation>
</comment>
<comment type="similarity">
    <text evidence="4">Belongs to the mam3/map4 family.</text>
</comment>
<protein>
    <recommendedName>
        <fullName evidence="8">Putative cell agglutination protein pfl3</fullName>
    </recommendedName>
    <alternativeName>
        <fullName evidence="6">Adhesin pfl3</fullName>
    </alternativeName>
    <alternativeName>
        <fullName evidence="7">Pombe flocculin 3</fullName>
    </alternativeName>
</protein>
<reference key="1">
    <citation type="journal article" date="2002" name="Nature">
        <title>The genome sequence of Schizosaccharomyces pombe.</title>
        <authorList>
            <person name="Wood V."/>
            <person name="Gwilliam R."/>
            <person name="Rajandream M.A."/>
            <person name="Lyne M.H."/>
            <person name="Lyne R."/>
            <person name="Stewart A."/>
            <person name="Sgouros J.G."/>
            <person name="Peat N."/>
            <person name="Hayles J."/>
            <person name="Baker S.G."/>
            <person name="Basham D."/>
            <person name="Bowman S."/>
            <person name="Brooks K."/>
            <person name="Brown D."/>
            <person name="Brown S."/>
            <person name="Chillingworth T."/>
            <person name="Churcher C.M."/>
            <person name="Collins M."/>
            <person name="Connor R."/>
            <person name="Cronin A."/>
            <person name="Davis P."/>
            <person name="Feltwell T."/>
            <person name="Fraser A."/>
            <person name="Gentles S."/>
            <person name="Goble A."/>
            <person name="Hamlin N."/>
            <person name="Harris D.E."/>
            <person name="Hidalgo J."/>
            <person name="Hodgson G."/>
            <person name="Holroyd S."/>
            <person name="Hornsby T."/>
            <person name="Howarth S."/>
            <person name="Huckle E.J."/>
            <person name="Hunt S."/>
            <person name="Jagels K."/>
            <person name="James K.D."/>
            <person name="Jones L."/>
            <person name="Jones M."/>
            <person name="Leather S."/>
            <person name="McDonald S."/>
            <person name="McLean J."/>
            <person name="Mooney P."/>
            <person name="Moule S."/>
            <person name="Mungall K.L."/>
            <person name="Murphy L.D."/>
            <person name="Niblett D."/>
            <person name="Odell C."/>
            <person name="Oliver K."/>
            <person name="O'Neil S."/>
            <person name="Pearson D."/>
            <person name="Quail M.A."/>
            <person name="Rabbinowitsch E."/>
            <person name="Rutherford K.M."/>
            <person name="Rutter S."/>
            <person name="Saunders D."/>
            <person name="Seeger K."/>
            <person name="Sharp S."/>
            <person name="Skelton J."/>
            <person name="Simmonds M.N."/>
            <person name="Squares R."/>
            <person name="Squares S."/>
            <person name="Stevens K."/>
            <person name="Taylor K."/>
            <person name="Taylor R.G."/>
            <person name="Tivey A."/>
            <person name="Walsh S.V."/>
            <person name="Warren T."/>
            <person name="Whitehead S."/>
            <person name="Woodward J.R."/>
            <person name="Volckaert G."/>
            <person name="Aert R."/>
            <person name="Robben J."/>
            <person name="Grymonprez B."/>
            <person name="Weltjens I."/>
            <person name="Vanstreels E."/>
            <person name="Rieger M."/>
            <person name="Schaefer M."/>
            <person name="Mueller-Auer S."/>
            <person name="Gabel C."/>
            <person name="Fuchs M."/>
            <person name="Duesterhoeft A."/>
            <person name="Fritzc C."/>
            <person name="Holzer E."/>
            <person name="Moestl D."/>
            <person name="Hilbert H."/>
            <person name="Borzym K."/>
            <person name="Langer I."/>
            <person name="Beck A."/>
            <person name="Lehrach H."/>
            <person name="Reinhardt R."/>
            <person name="Pohl T.M."/>
            <person name="Eger P."/>
            <person name="Zimmermann W."/>
            <person name="Wedler H."/>
            <person name="Wambutt R."/>
            <person name="Purnelle B."/>
            <person name="Goffeau A."/>
            <person name="Cadieu E."/>
            <person name="Dreano S."/>
            <person name="Gloux S."/>
            <person name="Lelaure V."/>
            <person name="Mottier S."/>
            <person name="Galibert F."/>
            <person name="Aves S.J."/>
            <person name="Xiang Z."/>
            <person name="Hunt C."/>
            <person name="Moore K."/>
            <person name="Hurst S.M."/>
            <person name="Lucas M."/>
            <person name="Rochet M."/>
            <person name="Gaillardin C."/>
            <person name="Tallada V.A."/>
            <person name="Garzon A."/>
            <person name="Thode G."/>
            <person name="Daga R.R."/>
            <person name="Cruzado L."/>
            <person name="Jimenez J."/>
            <person name="Sanchez M."/>
            <person name="del Rey F."/>
            <person name="Benito J."/>
            <person name="Dominguez A."/>
            <person name="Revuelta J.L."/>
            <person name="Moreno S."/>
            <person name="Armstrong J."/>
            <person name="Forsburg S.L."/>
            <person name="Cerutti L."/>
            <person name="Lowe T."/>
            <person name="McCombie W.R."/>
            <person name="Paulsen I."/>
            <person name="Potashkin J."/>
            <person name="Shpakovski G.V."/>
            <person name="Ussery D."/>
            <person name="Barrell B.G."/>
            <person name="Nurse P."/>
        </authorList>
    </citation>
    <scope>NUCLEOTIDE SEQUENCE [LARGE SCALE GENOMIC DNA]</scope>
    <source>
        <strain>972 / ATCC 24843</strain>
    </source>
</reference>
<reference key="2">
    <citation type="journal article" date="2008" name="Fungal Genet. Biol.">
        <title>Molecular phylogenetics of ascomycotal adhesins--a novel family of putative cell-surface adhesive proteins in fission yeasts.</title>
        <authorList>
            <person name="Linder T."/>
            <person name="Gustafsson C.M."/>
        </authorList>
    </citation>
    <scope>DOMAIN</scope>
    <scope>REPEATS</scope>
</reference>
<reference key="3">
    <citation type="journal article" date="2012" name="PLoS Genet.">
        <title>Deciphering the transcriptional-regulatory network of flocculation in Schizosaccharomyces pombe.</title>
        <authorList>
            <person name="Kwon E.J."/>
            <person name="Laderoute A."/>
            <person name="Chatfield-Reed K."/>
            <person name="Vachon L."/>
            <person name="Karagiannis J."/>
            <person name="Chua G."/>
        </authorList>
    </citation>
    <scope>FUNCTION</scope>
</reference>
<keyword id="KW-0325">Glycoprotein</keyword>
<keyword id="KW-1185">Reference proteome</keyword>
<keyword id="KW-0677">Repeat</keyword>
<keyword id="KW-0732">Signal</keyword>
<feature type="signal peptide" evidence="2">
    <location>
        <begin position="1"/>
        <end position="24"/>
    </location>
</feature>
<feature type="chain" id="PRO_0000353811" description="Putative cell agglutination protein pfl3">
    <location>
        <begin position="25"/>
        <end position="973"/>
    </location>
</feature>
<feature type="repeat" description="1" evidence="9">
    <location>
        <begin position="198"/>
        <end position="232"/>
    </location>
</feature>
<feature type="repeat" description="2" evidence="9">
    <location>
        <begin position="233"/>
        <end position="267"/>
    </location>
</feature>
<feature type="repeat" description="3" evidence="9">
    <location>
        <begin position="268"/>
        <end position="302"/>
    </location>
</feature>
<feature type="repeat" description="4" evidence="9">
    <location>
        <begin position="303"/>
        <end position="337"/>
    </location>
</feature>
<feature type="repeat" description="5" evidence="9">
    <location>
        <begin position="338"/>
        <end position="372"/>
    </location>
</feature>
<feature type="repeat" description="6" evidence="9">
    <location>
        <begin position="373"/>
        <end position="407"/>
    </location>
</feature>
<feature type="repeat" description="7" evidence="9">
    <location>
        <begin position="408"/>
        <end position="442"/>
    </location>
</feature>
<feature type="repeat" description="8" evidence="9">
    <location>
        <begin position="443"/>
        <end position="477"/>
    </location>
</feature>
<feature type="repeat" description="9" evidence="9">
    <location>
        <begin position="478"/>
        <end position="512"/>
    </location>
</feature>
<feature type="repeat" description="10" evidence="9">
    <location>
        <begin position="513"/>
        <end position="547"/>
    </location>
</feature>
<feature type="repeat" description="11" evidence="9">
    <location>
        <begin position="548"/>
        <end position="582"/>
    </location>
</feature>
<feature type="repeat" description="12" evidence="9">
    <location>
        <begin position="583"/>
        <end position="617"/>
    </location>
</feature>
<feature type="repeat" description="13" evidence="9">
    <location>
        <begin position="618"/>
        <end position="652"/>
    </location>
</feature>
<feature type="repeat" description="14" evidence="9">
    <location>
        <begin position="653"/>
        <end position="687"/>
    </location>
</feature>
<feature type="repeat" description="15" evidence="9">
    <location>
        <begin position="688"/>
        <end position="722"/>
    </location>
</feature>
<feature type="repeat" description="16" evidence="9">
    <location>
        <begin position="723"/>
        <end position="757"/>
    </location>
</feature>
<feature type="repeat" description="17" evidence="9">
    <location>
        <begin position="758"/>
        <end position="792"/>
    </location>
</feature>
<feature type="repeat" description="18" evidence="9">
    <location>
        <begin position="793"/>
        <end position="828"/>
    </location>
</feature>
<feature type="domain" description="DIPSY" evidence="4">
    <location>
        <begin position="820"/>
        <end position="973"/>
    </location>
</feature>
<feature type="region of interest" description="18 X 35 AA approximate tandem repeats" evidence="9">
    <location>
        <begin position="198"/>
        <end position="828"/>
    </location>
</feature>
<feature type="glycosylation site" description="N-linked (GlcNAc...) asparagine" evidence="3">
    <location>
        <position position="75"/>
    </location>
</feature>
<feature type="glycosylation site" description="N-linked (GlcNAc...) asparagine" evidence="3">
    <location>
        <position position="96"/>
    </location>
</feature>
<feature type="glycosylation site" description="N-linked (GlcNAc...) asparagine" evidence="3">
    <location>
        <position position="147"/>
    </location>
</feature>
<feature type="glycosylation site" description="N-linked (GlcNAc...) asparagine" evidence="3">
    <location>
        <position position="171"/>
    </location>
</feature>
<feature type="glycosylation site" description="N-linked (GlcNAc...) asparagine" evidence="3">
    <location>
        <position position="184"/>
    </location>
</feature>
<feature type="glycosylation site" description="N-linked (GlcNAc...) asparagine" evidence="3">
    <location>
        <position position="218"/>
    </location>
</feature>
<feature type="glycosylation site" description="N-linked (GlcNAc...) asparagine" evidence="3">
    <location>
        <position position="253"/>
    </location>
</feature>
<feature type="glycosylation site" description="N-linked (GlcNAc...) asparagine" evidence="3">
    <location>
        <position position="352"/>
    </location>
</feature>
<feature type="glycosylation site" description="N-linked (GlcNAc...) asparagine" evidence="3">
    <location>
        <position position="393"/>
    </location>
</feature>
<feature type="glycosylation site" description="N-linked (GlcNAc...) asparagine" evidence="3">
    <location>
        <position position="848"/>
    </location>
</feature>
<accession>Q874R4</accession>
<gene>
    <name evidence="7" type="primary">pfl3</name>
    <name evidence="10" type="ORF">SPBC947.04</name>
</gene>
<proteinExistence type="inferred from homology"/>
<dbReference type="EMBL" id="CU329671">
    <property type="protein sequence ID" value="CAA17032.1"/>
    <property type="molecule type" value="Genomic_DNA"/>
</dbReference>
<dbReference type="PIR" id="T40778">
    <property type="entry name" value="T40778"/>
</dbReference>
<dbReference type="RefSeq" id="NP_595272.1">
    <property type="nucleotide sequence ID" value="NM_001021179.2"/>
</dbReference>
<dbReference type="BioGRID" id="277751">
    <property type="interactions" value="10"/>
</dbReference>
<dbReference type="STRING" id="284812.Q874R4"/>
<dbReference type="GlyCosmos" id="Q874R4">
    <property type="glycosylation" value="10 sites, No reported glycans"/>
</dbReference>
<dbReference type="iPTMnet" id="Q874R4"/>
<dbReference type="PaxDb" id="4896-SPBC947.04.1"/>
<dbReference type="EnsemblFungi" id="SPBC947.04.1">
    <property type="protein sequence ID" value="SPBC947.04.1:pep"/>
    <property type="gene ID" value="SPBC947.04"/>
</dbReference>
<dbReference type="GeneID" id="2541237"/>
<dbReference type="KEGG" id="spo:2541237"/>
<dbReference type="PomBase" id="SPBC947.04">
    <property type="gene designation" value="pfl3"/>
</dbReference>
<dbReference type="VEuPathDB" id="FungiDB:SPBC947.04"/>
<dbReference type="HOGENOM" id="CLU_305054_0_0_1"/>
<dbReference type="InParanoid" id="Q874R4"/>
<dbReference type="PhylomeDB" id="Q874R4"/>
<dbReference type="PRO" id="PR:Q874R4"/>
<dbReference type="Proteomes" id="UP000002485">
    <property type="component" value="Chromosome II"/>
</dbReference>
<dbReference type="GO" id="GO:0010339">
    <property type="term" value="C:external side of cell wall"/>
    <property type="evidence" value="ECO:0000304"/>
    <property type="project" value="PomBase"/>
</dbReference>
<dbReference type="GO" id="GO:0000128">
    <property type="term" value="P:flocculation"/>
    <property type="evidence" value="ECO:0000315"/>
    <property type="project" value="PomBase"/>
</dbReference>
<dbReference type="InterPro" id="IPR021746">
    <property type="entry name" value="DIPSY"/>
</dbReference>
<dbReference type="InterPro" id="IPR051905">
    <property type="entry name" value="S_pombe_Mam3/Map4"/>
</dbReference>
<dbReference type="PANTHER" id="PTHR31492">
    <property type="entry name" value="M CELL-TYPE AGGLUTINATION PROTEIN MAM3-RELATED"/>
    <property type="match status" value="1"/>
</dbReference>
<dbReference type="PANTHER" id="PTHR31492:SF14">
    <property type="entry name" value="M CELL-TYPE AGGLUTINATION PROTEIN MAM3-RELATED"/>
    <property type="match status" value="1"/>
</dbReference>
<dbReference type="Pfam" id="PF11763">
    <property type="entry name" value="DIPSY"/>
    <property type="match status" value="1"/>
</dbReference>
<dbReference type="PROSITE" id="PS51825">
    <property type="entry name" value="DIPSY"/>
    <property type="match status" value="1"/>
</dbReference>